<name>MUTS_NITHX</name>
<reference key="1">
    <citation type="submission" date="2006-03" db="EMBL/GenBank/DDBJ databases">
        <title>Complete sequence of chromosome of Nitrobacter hamburgensis X14.</title>
        <authorList>
            <consortium name="US DOE Joint Genome Institute"/>
            <person name="Copeland A."/>
            <person name="Lucas S."/>
            <person name="Lapidus A."/>
            <person name="Barry K."/>
            <person name="Detter J.C."/>
            <person name="Glavina del Rio T."/>
            <person name="Hammon N."/>
            <person name="Israni S."/>
            <person name="Dalin E."/>
            <person name="Tice H."/>
            <person name="Pitluck S."/>
            <person name="Chain P."/>
            <person name="Malfatti S."/>
            <person name="Shin M."/>
            <person name="Vergez L."/>
            <person name="Schmutz J."/>
            <person name="Larimer F."/>
            <person name="Land M."/>
            <person name="Hauser L."/>
            <person name="Kyrpides N."/>
            <person name="Ivanova N."/>
            <person name="Ward B."/>
            <person name="Arp D."/>
            <person name="Klotz M."/>
            <person name="Stein L."/>
            <person name="O'Mullan G."/>
            <person name="Starkenburg S."/>
            <person name="Sayavedra L."/>
            <person name="Poret-Peterson A.T."/>
            <person name="Gentry M.E."/>
            <person name="Bruce D."/>
            <person name="Richardson P."/>
        </authorList>
    </citation>
    <scope>NUCLEOTIDE SEQUENCE [LARGE SCALE GENOMIC DNA]</scope>
    <source>
        <strain>DSM 10229 / NCIMB 13809 / X14</strain>
    </source>
</reference>
<sequence>MTIQPAVPTSPTNAAPEAARVTPMMEQYLEIKAANPGLLLFYRMGDFYELFFEDAEIASCTLGITLTKRGKHQGADIPMCGVPVERSDDYLHRLIAAGHRVAVCEQMEDPAAARRRGNKSVVRRDVVRLITPGTLTEDTLLDARANNYLLALARARASSGGNRIALAWIDISTAEFIVTECSTGELAATLARINPNEVIVSDALYGDPDMAALLRELPSVTPLTRDVFDGATAERRLCDYFAVATMDGLSAMSWLEATAAAAAVTYVDRTQIGKRPPLSPPSREAAGSTMAIDPATRANLELTRTLAGERRGSLLDAIDRTMTAAGSRLLAQRLAAPLTDIAAIARRLDAVAAFTSDSAARDDIRTILRTAPDMSRALARLSVGRGGPRDLAGLRDGIMAADRTLARLSALPDPPQDIVAAMQALRRPSRELARELGEALAENLPLMKRDGGFAREGYEPTLDEARKLRDDSRLVVAAMQARYTEETGVKTLKIRHNNVLGYFVEVTAQHGDKLTSAPLNATFIHRQTLAGQVRFTTSELGEIEARIANAGDRALGLELEIFDRLAAVVVEAGDDLRAAAHAFAQLDVAASLAKLATDENFTRPEVDASLGFAIEGGRHPVVEQALKRAGQPFIANACDLSPGPGQTSGQIWLLTGPNMAGKSTFLRQNALIALMAQIGSFVPATRARIGMIDRLFSRVGAADDLARGRSTFMVEMVETAVILNQASERALVILDEIGRGTATFDGLSIAWAAIEHLHEANKCRALFATHYHELTALSAKLPRLFNATVRVKEWHGEVVFLHEVLPGAADRSYGIQVAKLAGLPPSVVARAKSVLAKLEAQDRGSTVRALVDDLPLFAVPSRAADESAPPGEAAPLIEALKALHPDEMSPREALEALYALKAKLPKP</sequence>
<accession>Q1QQJ4</accession>
<evidence type="ECO:0000255" key="1">
    <source>
        <dbReference type="HAMAP-Rule" id="MF_00096"/>
    </source>
</evidence>
<organism>
    <name type="scientific">Nitrobacter hamburgensis (strain DSM 10229 / NCIMB 13809 / X14)</name>
    <dbReference type="NCBI Taxonomy" id="323097"/>
    <lineage>
        <taxon>Bacteria</taxon>
        <taxon>Pseudomonadati</taxon>
        <taxon>Pseudomonadota</taxon>
        <taxon>Alphaproteobacteria</taxon>
        <taxon>Hyphomicrobiales</taxon>
        <taxon>Nitrobacteraceae</taxon>
        <taxon>Nitrobacter</taxon>
    </lineage>
</organism>
<gene>
    <name evidence="1" type="primary">mutS</name>
    <name type="ordered locus">Nham_0614</name>
</gene>
<feature type="chain" id="PRO_0000335185" description="DNA mismatch repair protein MutS">
    <location>
        <begin position="1"/>
        <end position="907"/>
    </location>
</feature>
<feature type="binding site" evidence="1">
    <location>
        <begin position="656"/>
        <end position="663"/>
    </location>
    <ligand>
        <name>ATP</name>
        <dbReference type="ChEBI" id="CHEBI:30616"/>
    </ligand>
</feature>
<keyword id="KW-0067">ATP-binding</keyword>
<keyword id="KW-0227">DNA damage</keyword>
<keyword id="KW-0234">DNA repair</keyword>
<keyword id="KW-0238">DNA-binding</keyword>
<keyword id="KW-0547">Nucleotide-binding</keyword>
<keyword id="KW-1185">Reference proteome</keyword>
<protein>
    <recommendedName>
        <fullName evidence="1">DNA mismatch repair protein MutS</fullName>
    </recommendedName>
</protein>
<comment type="function">
    <text evidence="1">This protein is involved in the repair of mismatches in DNA. It is possible that it carries out the mismatch recognition step. This protein has a weak ATPase activity.</text>
</comment>
<comment type="similarity">
    <text evidence="1">Belongs to the DNA mismatch repair MutS family.</text>
</comment>
<proteinExistence type="inferred from homology"/>
<dbReference type="EMBL" id="CP000319">
    <property type="protein sequence ID" value="ABE61503.1"/>
    <property type="molecule type" value="Genomic_DNA"/>
</dbReference>
<dbReference type="RefSeq" id="WP_011509207.1">
    <property type="nucleotide sequence ID" value="NC_007964.1"/>
</dbReference>
<dbReference type="SMR" id="Q1QQJ4"/>
<dbReference type="STRING" id="323097.Nham_0614"/>
<dbReference type="KEGG" id="nha:Nham_0614"/>
<dbReference type="eggNOG" id="COG0249">
    <property type="taxonomic scope" value="Bacteria"/>
</dbReference>
<dbReference type="HOGENOM" id="CLU_002472_4_0_5"/>
<dbReference type="OrthoDB" id="9802448at2"/>
<dbReference type="Proteomes" id="UP000001953">
    <property type="component" value="Chromosome"/>
</dbReference>
<dbReference type="GO" id="GO:0005829">
    <property type="term" value="C:cytosol"/>
    <property type="evidence" value="ECO:0007669"/>
    <property type="project" value="TreeGrafter"/>
</dbReference>
<dbReference type="GO" id="GO:0005524">
    <property type="term" value="F:ATP binding"/>
    <property type="evidence" value="ECO:0007669"/>
    <property type="project" value="UniProtKB-UniRule"/>
</dbReference>
<dbReference type="GO" id="GO:0140664">
    <property type="term" value="F:ATP-dependent DNA damage sensor activity"/>
    <property type="evidence" value="ECO:0007669"/>
    <property type="project" value="InterPro"/>
</dbReference>
<dbReference type="GO" id="GO:0003684">
    <property type="term" value="F:damaged DNA binding"/>
    <property type="evidence" value="ECO:0007669"/>
    <property type="project" value="UniProtKB-UniRule"/>
</dbReference>
<dbReference type="GO" id="GO:0030983">
    <property type="term" value="F:mismatched DNA binding"/>
    <property type="evidence" value="ECO:0007669"/>
    <property type="project" value="InterPro"/>
</dbReference>
<dbReference type="GO" id="GO:0006298">
    <property type="term" value="P:mismatch repair"/>
    <property type="evidence" value="ECO:0007669"/>
    <property type="project" value="UniProtKB-UniRule"/>
</dbReference>
<dbReference type="CDD" id="cd03284">
    <property type="entry name" value="ABC_MutS1"/>
    <property type="match status" value="1"/>
</dbReference>
<dbReference type="FunFam" id="3.40.1170.10:FF:000001">
    <property type="entry name" value="DNA mismatch repair protein MutS"/>
    <property type="match status" value="1"/>
</dbReference>
<dbReference type="FunFam" id="3.40.50.300:FF:001579">
    <property type="entry name" value="DNA mismatch repair protein MutS"/>
    <property type="match status" value="1"/>
</dbReference>
<dbReference type="Gene3D" id="1.10.1420.10">
    <property type="match status" value="2"/>
</dbReference>
<dbReference type="Gene3D" id="6.10.140.430">
    <property type="match status" value="1"/>
</dbReference>
<dbReference type="Gene3D" id="3.40.1170.10">
    <property type="entry name" value="DNA repair protein MutS, domain I"/>
    <property type="match status" value="1"/>
</dbReference>
<dbReference type="Gene3D" id="3.30.420.110">
    <property type="entry name" value="MutS, connector domain"/>
    <property type="match status" value="1"/>
</dbReference>
<dbReference type="Gene3D" id="3.40.50.300">
    <property type="entry name" value="P-loop containing nucleotide triphosphate hydrolases"/>
    <property type="match status" value="1"/>
</dbReference>
<dbReference type="HAMAP" id="MF_00096">
    <property type="entry name" value="MutS"/>
    <property type="match status" value="1"/>
</dbReference>
<dbReference type="InterPro" id="IPR005748">
    <property type="entry name" value="DNA_mismatch_repair_MutS"/>
</dbReference>
<dbReference type="InterPro" id="IPR007695">
    <property type="entry name" value="DNA_mismatch_repair_MutS-lik_N"/>
</dbReference>
<dbReference type="InterPro" id="IPR017261">
    <property type="entry name" value="DNA_mismatch_repair_MutS/MSH"/>
</dbReference>
<dbReference type="InterPro" id="IPR000432">
    <property type="entry name" value="DNA_mismatch_repair_MutS_C"/>
</dbReference>
<dbReference type="InterPro" id="IPR007861">
    <property type="entry name" value="DNA_mismatch_repair_MutS_clamp"/>
</dbReference>
<dbReference type="InterPro" id="IPR007696">
    <property type="entry name" value="DNA_mismatch_repair_MutS_core"/>
</dbReference>
<dbReference type="InterPro" id="IPR016151">
    <property type="entry name" value="DNA_mismatch_repair_MutS_N"/>
</dbReference>
<dbReference type="InterPro" id="IPR036187">
    <property type="entry name" value="DNA_mismatch_repair_MutS_sf"/>
</dbReference>
<dbReference type="InterPro" id="IPR007860">
    <property type="entry name" value="DNA_mmatch_repair_MutS_con_dom"/>
</dbReference>
<dbReference type="InterPro" id="IPR045076">
    <property type="entry name" value="MutS"/>
</dbReference>
<dbReference type="InterPro" id="IPR036678">
    <property type="entry name" value="MutS_con_dom_sf"/>
</dbReference>
<dbReference type="InterPro" id="IPR027417">
    <property type="entry name" value="P-loop_NTPase"/>
</dbReference>
<dbReference type="NCBIfam" id="TIGR01070">
    <property type="entry name" value="mutS1"/>
    <property type="match status" value="1"/>
</dbReference>
<dbReference type="NCBIfam" id="NF003810">
    <property type="entry name" value="PRK05399.1"/>
    <property type="match status" value="1"/>
</dbReference>
<dbReference type="PANTHER" id="PTHR11361:SF34">
    <property type="entry name" value="DNA MISMATCH REPAIR PROTEIN MSH1, MITOCHONDRIAL"/>
    <property type="match status" value="1"/>
</dbReference>
<dbReference type="PANTHER" id="PTHR11361">
    <property type="entry name" value="DNA MISMATCH REPAIR PROTEIN MUTS FAMILY MEMBER"/>
    <property type="match status" value="1"/>
</dbReference>
<dbReference type="Pfam" id="PF01624">
    <property type="entry name" value="MutS_I"/>
    <property type="match status" value="1"/>
</dbReference>
<dbReference type="Pfam" id="PF05188">
    <property type="entry name" value="MutS_II"/>
    <property type="match status" value="1"/>
</dbReference>
<dbReference type="Pfam" id="PF05192">
    <property type="entry name" value="MutS_III"/>
    <property type="match status" value="1"/>
</dbReference>
<dbReference type="Pfam" id="PF05190">
    <property type="entry name" value="MutS_IV"/>
    <property type="match status" value="1"/>
</dbReference>
<dbReference type="Pfam" id="PF00488">
    <property type="entry name" value="MutS_V"/>
    <property type="match status" value="1"/>
</dbReference>
<dbReference type="PIRSF" id="PIRSF037677">
    <property type="entry name" value="DNA_mis_repair_Msh6"/>
    <property type="match status" value="1"/>
</dbReference>
<dbReference type="SMART" id="SM00534">
    <property type="entry name" value="MUTSac"/>
    <property type="match status" value="1"/>
</dbReference>
<dbReference type="SMART" id="SM00533">
    <property type="entry name" value="MUTSd"/>
    <property type="match status" value="1"/>
</dbReference>
<dbReference type="SUPFAM" id="SSF55271">
    <property type="entry name" value="DNA repair protein MutS, domain I"/>
    <property type="match status" value="1"/>
</dbReference>
<dbReference type="SUPFAM" id="SSF53150">
    <property type="entry name" value="DNA repair protein MutS, domain II"/>
    <property type="match status" value="1"/>
</dbReference>
<dbReference type="SUPFAM" id="SSF48334">
    <property type="entry name" value="DNA repair protein MutS, domain III"/>
    <property type="match status" value="1"/>
</dbReference>
<dbReference type="SUPFAM" id="SSF52540">
    <property type="entry name" value="P-loop containing nucleoside triphosphate hydrolases"/>
    <property type="match status" value="1"/>
</dbReference>
<dbReference type="PROSITE" id="PS00486">
    <property type="entry name" value="DNA_MISMATCH_REPAIR_2"/>
    <property type="match status" value="1"/>
</dbReference>